<organism>
    <name type="scientific">Thermotoga neapolitana (strain ATCC 49049 / DSM 4359 / NBRC 107923 / NS-E)</name>
    <dbReference type="NCBI Taxonomy" id="309803"/>
    <lineage>
        <taxon>Bacteria</taxon>
        <taxon>Thermotogati</taxon>
        <taxon>Thermotogota</taxon>
        <taxon>Thermotogae</taxon>
        <taxon>Thermotogales</taxon>
        <taxon>Thermotogaceae</taxon>
        <taxon>Thermotoga</taxon>
    </lineage>
</organism>
<feature type="chain" id="PRO_1000165644" description="Small ribosomal subunit protein uS13">
    <location>
        <begin position="1"/>
        <end position="125"/>
    </location>
</feature>
<feature type="region of interest" description="Disordered" evidence="2">
    <location>
        <begin position="97"/>
        <end position="125"/>
    </location>
</feature>
<feature type="compositionally biased region" description="Basic residues" evidence="2">
    <location>
        <begin position="101"/>
        <end position="125"/>
    </location>
</feature>
<accession>B9K8B1</accession>
<reference key="1">
    <citation type="submission" date="2007-11" db="EMBL/GenBank/DDBJ databases">
        <title>The genome sequence of the hyperthermophilic bacterium Thermotoga neapolitana.</title>
        <authorList>
            <person name="Lim S.K."/>
            <person name="Kim J.S."/>
            <person name="Cha S.H."/>
            <person name="Park B.C."/>
            <person name="Lee D.S."/>
            <person name="Tae H.S."/>
            <person name="Kim S.-J."/>
            <person name="Kim J.J."/>
            <person name="Park K.J."/>
            <person name="Lee S.Y."/>
        </authorList>
    </citation>
    <scope>NUCLEOTIDE SEQUENCE [LARGE SCALE GENOMIC DNA]</scope>
    <source>
        <strain>ATCC 49049 / DSM 4359 / NBRC 107923 / NS-E</strain>
    </source>
</reference>
<sequence length="125" mass="14418">MARIVGVELPNNKKVWVALTYIYGIGRSRSFEILKNTGVDPDKRVGELTDEEISKITKYIQDHFKVEGELRSEVERNIRRLIEIGCYRGIRHKLGLPVRGQKTRSNARTRKGPRPSRIKTKKKSS</sequence>
<evidence type="ECO:0000255" key="1">
    <source>
        <dbReference type="HAMAP-Rule" id="MF_01315"/>
    </source>
</evidence>
<evidence type="ECO:0000256" key="2">
    <source>
        <dbReference type="SAM" id="MobiDB-lite"/>
    </source>
</evidence>
<evidence type="ECO:0000305" key="3"/>
<dbReference type="EMBL" id="CP000916">
    <property type="protein sequence ID" value="ACM23194.1"/>
    <property type="molecule type" value="Genomic_DNA"/>
</dbReference>
<dbReference type="RefSeq" id="WP_015919510.1">
    <property type="nucleotide sequence ID" value="NC_011978.1"/>
</dbReference>
<dbReference type="SMR" id="B9K8B1"/>
<dbReference type="STRING" id="309803.CTN_1018"/>
<dbReference type="KEGG" id="tna:CTN_1018"/>
<dbReference type="eggNOG" id="COG0099">
    <property type="taxonomic scope" value="Bacteria"/>
</dbReference>
<dbReference type="HOGENOM" id="CLU_103849_1_2_0"/>
<dbReference type="Proteomes" id="UP000000445">
    <property type="component" value="Chromosome"/>
</dbReference>
<dbReference type="GO" id="GO:0005829">
    <property type="term" value="C:cytosol"/>
    <property type="evidence" value="ECO:0007669"/>
    <property type="project" value="TreeGrafter"/>
</dbReference>
<dbReference type="GO" id="GO:0015935">
    <property type="term" value="C:small ribosomal subunit"/>
    <property type="evidence" value="ECO:0007669"/>
    <property type="project" value="TreeGrafter"/>
</dbReference>
<dbReference type="GO" id="GO:0019843">
    <property type="term" value="F:rRNA binding"/>
    <property type="evidence" value="ECO:0007669"/>
    <property type="project" value="UniProtKB-UniRule"/>
</dbReference>
<dbReference type="GO" id="GO:0003735">
    <property type="term" value="F:structural constituent of ribosome"/>
    <property type="evidence" value="ECO:0007669"/>
    <property type="project" value="InterPro"/>
</dbReference>
<dbReference type="GO" id="GO:0000049">
    <property type="term" value="F:tRNA binding"/>
    <property type="evidence" value="ECO:0007669"/>
    <property type="project" value="UniProtKB-UniRule"/>
</dbReference>
<dbReference type="GO" id="GO:0006412">
    <property type="term" value="P:translation"/>
    <property type="evidence" value="ECO:0007669"/>
    <property type="project" value="UniProtKB-UniRule"/>
</dbReference>
<dbReference type="FunFam" id="1.10.8.50:FF:000001">
    <property type="entry name" value="30S ribosomal protein S13"/>
    <property type="match status" value="1"/>
</dbReference>
<dbReference type="FunFam" id="4.10.910.10:FF:000001">
    <property type="entry name" value="30S ribosomal protein S13"/>
    <property type="match status" value="1"/>
</dbReference>
<dbReference type="Gene3D" id="1.10.8.50">
    <property type="match status" value="1"/>
</dbReference>
<dbReference type="Gene3D" id="4.10.910.10">
    <property type="entry name" value="30s ribosomal protein s13, domain 2"/>
    <property type="match status" value="1"/>
</dbReference>
<dbReference type="HAMAP" id="MF_01315">
    <property type="entry name" value="Ribosomal_uS13"/>
    <property type="match status" value="1"/>
</dbReference>
<dbReference type="InterPro" id="IPR027437">
    <property type="entry name" value="Rbsml_uS13_C"/>
</dbReference>
<dbReference type="InterPro" id="IPR001892">
    <property type="entry name" value="Ribosomal_uS13"/>
</dbReference>
<dbReference type="InterPro" id="IPR010979">
    <property type="entry name" value="Ribosomal_uS13-like_H2TH"/>
</dbReference>
<dbReference type="InterPro" id="IPR019980">
    <property type="entry name" value="Ribosomal_uS13_bac-type"/>
</dbReference>
<dbReference type="InterPro" id="IPR018269">
    <property type="entry name" value="Ribosomal_uS13_CS"/>
</dbReference>
<dbReference type="NCBIfam" id="TIGR03631">
    <property type="entry name" value="uS13_bact"/>
    <property type="match status" value="1"/>
</dbReference>
<dbReference type="PANTHER" id="PTHR10871">
    <property type="entry name" value="30S RIBOSOMAL PROTEIN S13/40S RIBOSOMAL PROTEIN S18"/>
    <property type="match status" value="1"/>
</dbReference>
<dbReference type="PANTHER" id="PTHR10871:SF1">
    <property type="entry name" value="SMALL RIBOSOMAL SUBUNIT PROTEIN US13M"/>
    <property type="match status" value="1"/>
</dbReference>
<dbReference type="Pfam" id="PF00416">
    <property type="entry name" value="Ribosomal_S13"/>
    <property type="match status" value="1"/>
</dbReference>
<dbReference type="PIRSF" id="PIRSF002134">
    <property type="entry name" value="Ribosomal_S13"/>
    <property type="match status" value="1"/>
</dbReference>
<dbReference type="SUPFAM" id="SSF46946">
    <property type="entry name" value="S13-like H2TH domain"/>
    <property type="match status" value="1"/>
</dbReference>
<dbReference type="PROSITE" id="PS00646">
    <property type="entry name" value="RIBOSOMAL_S13_1"/>
    <property type="match status" value="1"/>
</dbReference>
<dbReference type="PROSITE" id="PS50159">
    <property type="entry name" value="RIBOSOMAL_S13_2"/>
    <property type="match status" value="1"/>
</dbReference>
<protein>
    <recommendedName>
        <fullName evidence="1">Small ribosomal subunit protein uS13</fullName>
    </recommendedName>
    <alternativeName>
        <fullName evidence="3">30S ribosomal protein S13</fullName>
    </alternativeName>
</protein>
<comment type="function">
    <text evidence="1">Located at the top of the head of the 30S subunit, it contacts several helices of the 16S rRNA. In the 70S ribosome it contacts the 23S rRNA (bridge B1a) and protein L5 of the 50S subunit (bridge B1b), connecting the 2 subunits; these bridges are implicated in subunit movement. Contacts the tRNAs in the A and P-sites.</text>
</comment>
<comment type="subunit">
    <text evidence="1">Part of the 30S ribosomal subunit. Forms a loose heterodimer with protein S19. Forms two bridges to the 50S subunit in the 70S ribosome.</text>
</comment>
<comment type="similarity">
    <text evidence="1">Belongs to the universal ribosomal protein uS13 family.</text>
</comment>
<name>RS13_THENN</name>
<proteinExistence type="inferred from homology"/>
<keyword id="KW-0687">Ribonucleoprotein</keyword>
<keyword id="KW-0689">Ribosomal protein</keyword>
<keyword id="KW-0694">RNA-binding</keyword>
<keyword id="KW-0699">rRNA-binding</keyword>
<keyword id="KW-0820">tRNA-binding</keyword>
<gene>
    <name evidence="1" type="primary">rpsM</name>
    <name type="ordered locus">CTN_1018</name>
</gene>